<organism>
    <name type="scientific">Synechococcus elongatus (strain ATCC 33912 / PCC 7942 / FACHB-805)</name>
    <name type="common">Anacystis nidulans R2</name>
    <dbReference type="NCBI Taxonomy" id="1140"/>
    <lineage>
        <taxon>Bacteria</taxon>
        <taxon>Bacillati</taxon>
        <taxon>Cyanobacteriota</taxon>
        <taxon>Cyanophyceae</taxon>
        <taxon>Synechococcales</taxon>
        <taxon>Synechococcaceae</taxon>
        <taxon>Synechococcus</taxon>
    </lineage>
</organism>
<evidence type="ECO:0000255" key="1">
    <source>
        <dbReference type="PROSITE-ProRule" id="PRU00253"/>
    </source>
</evidence>
<evidence type="ECO:0000256" key="2">
    <source>
        <dbReference type="SAM" id="MobiDB-lite"/>
    </source>
</evidence>
<evidence type="ECO:0000269" key="3">
    <source>
    </source>
</evidence>
<evidence type="ECO:0000305" key="4"/>
<evidence type="ECO:0007829" key="5">
    <source>
        <dbReference type="PDB" id="5Z49"/>
    </source>
</evidence>
<comment type="function">
    <text evidence="3">Activates transcription of the cmpABCD operon under carbon dioxide-limited conditions.</text>
</comment>
<comment type="subcellular location">
    <subcellularLocation>
        <location evidence="4">Cytoplasm</location>
    </subcellularLocation>
</comment>
<comment type="similarity">
    <text evidence="4">Belongs to the LysR transcriptional regulatory family.</text>
</comment>
<dbReference type="EMBL" id="AB047379">
    <property type="protein sequence ID" value="BAB18722.1"/>
    <property type="molecule type" value="Genomic_DNA"/>
</dbReference>
<dbReference type="EMBL" id="CP000100">
    <property type="protein sequence ID" value="ABB57340.1"/>
    <property type="molecule type" value="Genomic_DNA"/>
</dbReference>
<dbReference type="RefSeq" id="WP_011242557.1">
    <property type="nucleotide sequence ID" value="NZ_JACJTX010000003.1"/>
</dbReference>
<dbReference type="PDB" id="5Z49">
    <property type="method" value="X-ray"/>
    <property type="resolution" value="2.15 A"/>
    <property type="chains" value="A/B=94-323"/>
</dbReference>
<dbReference type="PDBsum" id="5Z49"/>
<dbReference type="SMR" id="Q9F1R2"/>
<dbReference type="STRING" id="1140.Synpcc7942_1310"/>
<dbReference type="PaxDb" id="1140-Synpcc7942_1310"/>
<dbReference type="GeneID" id="72430171"/>
<dbReference type="KEGG" id="syf:Synpcc7942_1310"/>
<dbReference type="eggNOG" id="COG0583">
    <property type="taxonomic scope" value="Bacteria"/>
</dbReference>
<dbReference type="HOGENOM" id="CLU_039613_6_1_3"/>
<dbReference type="OrthoDB" id="9785745at2"/>
<dbReference type="BioCyc" id="SYNEL:SYNPCC7942_1310-MONOMER"/>
<dbReference type="Proteomes" id="UP000889800">
    <property type="component" value="Chromosome"/>
</dbReference>
<dbReference type="GO" id="GO:0005737">
    <property type="term" value="C:cytoplasm"/>
    <property type="evidence" value="ECO:0007669"/>
    <property type="project" value="UniProtKB-SubCell"/>
</dbReference>
<dbReference type="GO" id="GO:0003700">
    <property type="term" value="F:DNA-binding transcription factor activity"/>
    <property type="evidence" value="ECO:0007669"/>
    <property type="project" value="InterPro"/>
</dbReference>
<dbReference type="GO" id="GO:0000976">
    <property type="term" value="F:transcription cis-regulatory region binding"/>
    <property type="evidence" value="ECO:0007669"/>
    <property type="project" value="TreeGrafter"/>
</dbReference>
<dbReference type="CDD" id="cd08419">
    <property type="entry name" value="PBP2_CbbR_RubisCO_like"/>
    <property type="match status" value="1"/>
</dbReference>
<dbReference type="FunFam" id="1.10.10.10:FF:000001">
    <property type="entry name" value="LysR family transcriptional regulator"/>
    <property type="match status" value="1"/>
</dbReference>
<dbReference type="Gene3D" id="3.40.190.290">
    <property type="match status" value="1"/>
</dbReference>
<dbReference type="Gene3D" id="1.10.10.10">
    <property type="entry name" value="Winged helix-like DNA-binding domain superfamily/Winged helix DNA-binding domain"/>
    <property type="match status" value="1"/>
</dbReference>
<dbReference type="InterPro" id="IPR005119">
    <property type="entry name" value="LysR_subst-bd"/>
</dbReference>
<dbReference type="InterPro" id="IPR000847">
    <property type="entry name" value="Tscrpt_reg_HTH_LysR"/>
</dbReference>
<dbReference type="InterPro" id="IPR036388">
    <property type="entry name" value="WH-like_DNA-bd_sf"/>
</dbReference>
<dbReference type="InterPro" id="IPR036390">
    <property type="entry name" value="WH_DNA-bd_sf"/>
</dbReference>
<dbReference type="PANTHER" id="PTHR30126:SF5">
    <property type="entry name" value="HTH-TYPE TRANSCRIPTIONAL ACTIVATOR CMPR"/>
    <property type="match status" value="1"/>
</dbReference>
<dbReference type="PANTHER" id="PTHR30126">
    <property type="entry name" value="HTH-TYPE TRANSCRIPTIONAL REGULATOR"/>
    <property type="match status" value="1"/>
</dbReference>
<dbReference type="Pfam" id="PF00126">
    <property type="entry name" value="HTH_1"/>
    <property type="match status" value="1"/>
</dbReference>
<dbReference type="Pfam" id="PF03466">
    <property type="entry name" value="LysR_substrate"/>
    <property type="match status" value="1"/>
</dbReference>
<dbReference type="PRINTS" id="PR00039">
    <property type="entry name" value="HTHLYSR"/>
</dbReference>
<dbReference type="SUPFAM" id="SSF53850">
    <property type="entry name" value="Periplasmic binding protein-like II"/>
    <property type="match status" value="1"/>
</dbReference>
<dbReference type="SUPFAM" id="SSF46785">
    <property type="entry name" value="Winged helix' DNA-binding domain"/>
    <property type="match status" value="1"/>
</dbReference>
<dbReference type="PROSITE" id="PS50931">
    <property type="entry name" value="HTH_LYSR"/>
    <property type="match status" value="1"/>
</dbReference>
<gene>
    <name type="primary">cmpR</name>
    <name type="ordered locus">Synpcc7942_1310</name>
</gene>
<feature type="chain" id="PRO_0000341942" description="HTH-type transcriptional activator CmpR">
    <location>
        <begin position="1"/>
        <end position="323"/>
    </location>
</feature>
<feature type="domain" description="HTH lysR-type" evidence="1">
    <location>
        <begin position="4"/>
        <end position="61"/>
    </location>
</feature>
<feature type="DNA-binding region" description="H-T-H motif" evidence="1">
    <location>
        <begin position="21"/>
        <end position="40"/>
    </location>
</feature>
<feature type="region of interest" description="Disordered" evidence="2">
    <location>
        <begin position="304"/>
        <end position="323"/>
    </location>
</feature>
<feature type="strand" evidence="5">
    <location>
        <begin position="94"/>
        <end position="101"/>
    </location>
</feature>
<feature type="helix" evidence="5">
    <location>
        <begin position="102"/>
        <end position="106"/>
    </location>
</feature>
<feature type="helix" evidence="5">
    <location>
        <begin position="109"/>
        <end position="118"/>
    </location>
</feature>
<feature type="strand" evidence="5">
    <location>
        <begin position="122"/>
        <end position="129"/>
    </location>
</feature>
<feature type="helix" evidence="5">
    <location>
        <begin position="131"/>
        <end position="140"/>
    </location>
</feature>
<feature type="strand" evidence="5">
    <location>
        <begin position="144"/>
        <end position="150"/>
    </location>
</feature>
<feature type="strand" evidence="5">
    <location>
        <begin position="153"/>
        <end position="155"/>
    </location>
</feature>
<feature type="strand" evidence="5">
    <location>
        <begin position="157"/>
        <end position="164"/>
    </location>
</feature>
<feature type="strand" evidence="5">
    <location>
        <begin position="167"/>
        <end position="172"/>
    </location>
</feature>
<feature type="helix" evidence="5">
    <location>
        <begin position="176"/>
        <end position="179"/>
    </location>
</feature>
<feature type="strand" evidence="5">
    <location>
        <begin position="181"/>
        <end position="183"/>
    </location>
</feature>
<feature type="helix" evidence="5">
    <location>
        <begin position="185"/>
        <end position="189"/>
    </location>
</feature>
<feature type="strand" evidence="5">
    <location>
        <begin position="193"/>
        <end position="195"/>
    </location>
</feature>
<feature type="helix" evidence="5">
    <location>
        <begin position="201"/>
        <end position="212"/>
    </location>
</feature>
<feature type="strand" evidence="5">
    <location>
        <begin position="219"/>
        <end position="222"/>
    </location>
</feature>
<feature type="helix" evidence="5">
    <location>
        <begin position="226"/>
        <end position="234"/>
    </location>
</feature>
<feature type="strand" evidence="5">
    <location>
        <begin position="239"/>
        <end position="243"/>
    </location>
</feature>
<feature type="helix" evidence="5">
    <location>
        <begin position="244"/>
        <end position="247"/>
    </location>
</feature>
<feature type="strand" evidence="5">
    <location>
        <begin position="256"/>
        <end position="259"/>
    </location>
</feature>
<feature type="strand" evidence="5">
    <location>
        <begin position="269"/>
        <end position="278"/>
    </location>
</feature>
<feature type="helix" evidence="5">
    <location>
        <begin position="282"/>
        <end position="301"/>
    </location>
</feature>
<protein>
    <recommendedName>
        <fullName>HTH-type transcriptional activator CmpR</fullName>
    </recommendedName>
</protein>
<sequence>MKNLTLHQLKVFEAAARHSSFTRAAEELYLTQPTVSIQVKQLTKAVGLPLFEQIGKRLYLTEAGRQLYKTTRQVFEQLEQLDMTIADLQGMKQGQLRLAVITTAKYFIPRLIGPFCQRYPGINVSLKVTNHEGLINRINDNLDDLYVLSRPPSGFDITVQPFLDNPLVVVGPASHPLANQRGISLERLAQEPFILRERGSGTREATEQLFAAHNLNLNVKLDLGSNEAIKQAILGGLGLAVLSYHTLTSAGATPELKMFEVEGFPIHRQWHAVYPAGKQLSTVAATFLDYLLTESQRIAADIQIPESTTTDPELDAPQPVVGV</sequence>
<keyword id="KW-0002">3D-structure</keyword>
<keyword id="KW-0010">Activator</keyword>
<keyword id="KW-0963">Cytoplasm</keyword>
<keyword id="KW-0238">DNA-binding</keyword>
<keyword id="KW-1185">Reference proteome</keyword>
<keyword id="KW-0804">Transcription</keyword>
<keyword id="KW-0805">Transcription regulation</keyword>
<reference key="1">
    <citation type="journal article" date="2001" name="J. Bacteriol.">
        <title>Involvement of a CbbR homolog in low CO2-induced activation of the bicarbonate transporter operon in cyanobacteria.</title>
        <authorList>
            <person name="Omata T."/>
            <person name="Gohta S."/>
            <person name="Takahashi Y."/>
            <person name="Harano Y."/>
            <person name="Maeda S."/>
        </authorList>
    </citation>
    <scope>NUCLEOTIDE SEQUENCE [GENOMIC DNA]</scope>
    <scope>FUNCTION AS A TRANSCRIPTIONAL REGULATOR</scope>
</reference>
<reference key="2">
    <citation type="submission" date="2005-08" db="EMBL/GenBank/DDBJ databases">
        <title>Complete sequence of chromosome 1 of Synechococcus elongatus PCC 7942.</title>
        <authorList>
            <consortium name="US DOE Joint Genome Institute"/>
            <person name="Copeland A."/>
            <person name="Lucas S."/>
            <person name="Lapidus A."/>
            <person name="Barry K."/>
            <person name="Detter J.C."/>
            <person name="Glavina T."/>
            <person name="Hammon N."/>
            <person name="Israni S."/>
            <person name="Pitluck S."/>
            <person name="Schmutz J."/>
            <person name="Larimer F."/>
            <person name="Land M."/>
            <person name="Kyrpides N."/>
            <person name="Lykidis A."/>
            <person name="Golden S."/>
            <person name="Richardson P."/>
        </authorList>
    </citation>
    <scope>NUCLEOTIDE SEQUENCE [LARGE SCALE GENOMIC DNA]</scope>
    <source>
        <strain>ATCC 33912 / PCC 7942 / FACHB-805</strain>
    </source>
</reference>
<accession>Q9F1R2</accession>
<name>CMPR_SYNE7</name>
<proteinExistence type="evidence at protein level"/>